<sequence length="359" mass="37896">MITVNVDLGERAYPIHIGADLIGRTELFAPHIAGASVTIVTNTTVEPLYGDTLRAALAPLGKRVSTVVLPDGEAYKNWETLNLIFDGLLEQHADRKTTLIALGGGVIGDMTGFAAACYMRGVPFIQVPTTLLSQVDSSVGGKTGINHPLGKNMIGAFYQPQAVIADIGALSTLPDRELAAGVAEIVKTGAIADAAFFDWIEANVGALTRRDPDALAHAVKRSCEIKAGVVAADEREGGLRAILNFGHTFGHAIEAGLGYGEWLHGEAVGCGMVMAADLSVRTGHLDEASRARLCRVVEAAHLPTRAPDLGDARYVELMRVDKKAEAGAIKFILLKRFGETIITPAPDDAVLATLAATTR</sequence>
<dbReference type="EC" id="4.2.3.4" evidence="1"/>
<dbReference type="EMBL" id="CP000548">
    <property type="protein sequence ID" value="ABO04030.1"/>
    <property type="molecule type" value="Genomic_DNA"/>
</dbReference>
<dbReference type="RefSeq" id="WP_004196751.1">
    <property type="nucleotide sequence ID" value="NZ_CP007802.1"/>
</dbReference>
<dbReference type="SMR" id="A3MPY1"/>
<dbReference type="GeneID" id="92980425"/>
<dbReference type="KEGG" id="bmaz:BM44_538"/>
<dbReference type="KEGG" id="bmn:BMA10247_2796"/>
<dbReference type="PATRIC" id="fig|320389.8.peg.590"/>
<dbReference type="UniPathway" id="UPA00053">
    <property type="reaction ID" value="UER00085"/>
</dbReference>
<dbReference type="GO" id="GO:0005737">
    <property type="term" value="C:cytoplasm"/>
    <property type="evidence" value="ECO:0007669"/>
    <property type="project" value="UniProtKB-SubCell"/>
</dbReference>
<dbReference type="GO" id="GO:0003856">
    <property type="term" value="F:3-dehydroquinate synthase activity"/>
    <property type="evidence" value="ECO:0007669"/>
    <property type="project" value="UniProtKB-UniRule"/>
</dbReference>
<dbReference type="GO" id="GO:0046872">
    <property type="term" value="F:metal ion binding"/>
    <property type="evidence" value="ECO:0007669"/>
    <property type="project" value="UniProtKB-KW"/>
</dbReference>
<dbReference type="GO" id="GO:0000166">
    <property type="term" value="F:nucleotide binding"/>
    <property type="evidence" value="ECO:0007669"/>
    <property type="project" value="UniProtKB-KW"/>
</dbReference>
<dbReference type="GO" id="GO:0008652">
    <property type="term" value="P:amino acid biosynthetic process"/>
    <property type="evidence" value="ECO:0007669"/>
    <property type="project" value="UniProtKB-KW"/>
</dbReference>
<dbReference type="GO" id="GO:0009073">
    <property type="term" value="P:aromatic amino acid family biosynthetic process"/>
    <property type="evidence" value="ECO:0007669"/>
    <property type="project" value="UniProtKB-KW"/>
</dbReference>
<dbReference type="GO" id="GO:0009423">
    <property type="term" value="P:chorismate biosynthetic process"/>
    <property type="evidence" value="ECO:0007669"/>
    <property type="project" value="UniProtKB-UniRule"/>
</dbReference>
<dbReference type="CDD" id="cd08195">
    <property type="entry name" value="DHQS"/>
    <property type="match status" value="1"/>
</dbReference>
<dbReference type="FunFam" id="3.40.50.1970:FF:000001">
    <property type="entry name" value="3-dehydroquinate synthase"/>
    <property type="match status" value="1"/>
</dbReference>
<dbReference type="Gene3D" id="3.40.50.1970">
    <property type="match status" value="1"/>
</dbReference>
<dbReference type="Gene3D" id="1.20.1090.10">
    <property type="entry name" value="Dehydroquinate synthase-like - alpha domain"/>
    <property type="match status" value="1"/>
</dbReference>
<dbReference type="HAMAP" id="MF_00110">
    <property type="entry name" value="DHQ_synthase"/>
    <property type="match status" value="1"/>
</dbReference>
<dbReference type="InterPro" id="IPR050071">
    <property type="entry name" value="Dehydroquinate_synthase"/>
</dbReference>
<dbReference type="InterPro" id="IPR016037">
    <property type="entry name" value="DHQ_synth_AroB"/>
</dbReference>
<dbReference type="InterPro" id="IPR030963">
    <property type="entry name" value="DHQ_synth_fam"/>
</dbReference>
<dbReference type="InterPro" id="IPR030960">
    <property type="entry name" value="DHQS/DOIS_N"/>
</dbReference>
<dbReference type="InterPro" id="IPR056179">
    <property type="entry name" value="DHQS_C"/>
</dbReference>
<dbReference type="NCBIfam" id="TIGR01357">
    <property type="entry name" value="aroB"/>
    <property type="match status" value="1"/>
</dbReference>
<dbReference type="PANTHER" id="PTHR43622">
    <property type="entry name" value="3-DEHYDROQUINATE SYNTHASE"/>
    <property type="match status" value="1"/>
</dbReference>
<dbReference type="PANTHER" id="PTHR43622:SF7">
    <property type="entry name" value="3-DEHYDROQUINATE SYNTHASE, CHLOROPLASTIC"/>
    <property type="match status" value="1"/>
</dbReference>
<dbReference type="Pfam" id="PF01761">
    <property type="entry name" value="DHQ_synthase"/>
    <property type="match status" value="1"/>
</dbReference>
<dbReference type="Pfam" id="PF24621">
    <property type="entry name" value="DHQS_C"/>
    <property type="match status" value="1"/>
</dbReference>
<dbReference type="PIRSF" id="PIRSF001455">
    <property type="entry name" value="DHQ_synth"/>
    <property type="match status" value="1"/>
</dbReference>
<dbReference type="SUPFAM" id="SSF56796">
    <property type="entry name" value="Dehydroquinate synthase-like"/>
    <property type="match status" value="1"/>
</dbReference>
<evidence type="ECO:0000255" key="1">
    <source>
        <dbReference type="HAMAP-Rule" id="MF_00110"/>
    </source>
</evidence>
<name>AROB_BURM7</name>
<comment type="function">
    <text evidence="1">Catalyzes the conversion of 3-deoxy-D-arabino-heptulosonate 7-phosphate (DAHP) to dehydroquinate (DHQ).</text>
</comment>
<comment type="catalytic activity">
    <reaction evidence="1">
        <text>7-phospho-2-dehydro-3-deoxy-D-arabino-heptonate = 3-dehydroquinate + phosphate</text>
        <dbReference type="Rhea" id="RHEA:21968"/>
        <dbReference type="ChEBI" id="CHEBI:32364"/>
        <dbReference type="ChEBI" id="CHEBI:43474"/>
        <dbReference type="ChEBI" id="CHEBI:58394"/>
        <dbReference type="EC" id="4.2.3.4"/>
    </reaction>
</comment>
<comment type="cofactor">
    <cofactor evidence="1">
        <name>Co(2+)</name>
        <dbReference type="ChEBI" id="CHEBI:48828"/>
    </cofactor>
    <cofactor evidence="1">
        <name>Zn(2+)</name>
        <dbReference type="ChEBI" id="CHEBI:29105"/>
    </cofactor>
    <text evidence="1">Binds 1 divalent metal cation per subunit. Can use either Co(2+) or Zn(2+).</text>
</comment>
<comment type="cofactor">
    <cofactor evidence="1">
        <name>NAD(+)</name>
        <dbReference type="ChEBI" id="CHEBI:57540"/>
    </cofactor>
</comment>
<comment type="pathway">
    <text evidence="1">Metabolic intermediate biosynthesis; chorismate biosynthesis; chorismate from D-erythrose 4-phosphate and phosphoenolpyruvate: step 2/7.</text>
</comment>
<comment type="subcellular location">
    <subcellularLocation>
        <location evidence="1">Cytoplasm</location>
    </subcellularLocation>
</comment>
<comment type="similarity">
    <text evidence="1">Belongs to the sugar phosphate cyclases superfamily. Dehydroquinate synthase family.</text>
</comment>
<proteinExistence type="inferred from homology"/>
<organism>
    <name type="scientific">Burkholderia mallei (strain NCTC 10247)</name>
    <dbReference type="NCBI Taxonomy" id="320389"/>
    <lineage>
        <taxon>Bacteria</taxon>
        <taxon>Pseudomonadati</taxon>
        <taxon>Pseudomonadota</taxon>
        <taxon>Betaproteobacteria</taxon>
        <taxon>Burkholderiales</taxon>
        <taxon>Burkholderiaceae</taxon>
        <taxon>Burkholderia</taxon>
        <taxon>pseudomallei group</taxon>
    </lineage>
</organism>
<reference key="1">
    <citation type="journal article" date="2010" name="Genome Biol. Evol.">
        <title>Continuing evolution of Burkholderia mallei through genome reduction and large-scale rearrangements.</title>
        <authorList>
            <person name="Losada L."/>
            <person name="Ronning C.M."/>
            <person name="DeShazer D."/>
            <person name="Woods D."/>
            <person name="Fedorova N."/>
            <person name="Kim H.S."/>
            <person name="Shabalina S.A."/>
            <person name="Pearson T.R."/>
            <person name="Brinkac L."/>
            <person name="Tan P."/>
            <person name="Nandi T."/>
            <person name="Crabtree J."/>
            <person name="Badger J."/>
            <person name="Beckstrom-Sternberg S."/>
            <person name="Saqib M."/>
            <person name="Schutzer S.E."/>
            <person name="Keim P."/>
            <person name="Nierman W.C."/>
        </authorList>
    </citation>
    <scope>NUCLEOTIDE SEQUENCE [LARGE SCALE GENOMIC DNA]</scope>
    <source>
        <strain>NCTC 10247</strain>
    </source>
</reference>
<accession>A3MPY1</accession>
<feature type="chain" id="PRO_1000094475" description="3-dehydroquinate synthase">
    <location>
        <begin position="1"/>
        <end position="359"/>
    </location>
</feature>
<feature type="binding site" evidence="1">
    <location>
        <begin position="71"/>
        <end position="76"/>
    </location>
    <ligand>
        <name>NAD(+)</name>
        <dbReference type="ChEBI" id="CHEBI:57540"/>
    </ligand>
</feature>
<feature type="binding site" evidence="1">
    <location>
        <begin position="105"/>
        <end position="109"/>
    </location>
    <ligand>
        <name>NAD(+)</name>
        <dbReference type="ChEBI" id="CHEBI:57540"/>
    </ligand>
</feature>
<feature type="binding site" evidence="1">
    <location>
        <begin position="129"/>
        <end position="130"/>
    </location>
    <ligand>
        <name>NAD(+)</name>
        <dbReference type="ChEBI" id="CHEBI:57540"/>
    </ligand>
</feature>
<feature type="binding site" evidence="1">
    <location>
        <position position="142"/>
    </location>
    <ligand>
        <name>NAD(+)</name>
        <dbReference type="ChEBI" id="CHEBI:57540"/>
    </ligand>
</feature>
<feature type="binding site" evidence="1">
    <location>
        <position position="151"/>
    </location>
    <ligand>
        <name>NAD(+)</name>
        <dbReference type="ChEBI" id="CHEBI:57540"/>
    </ligand>
</feature>
<feature type="binding site" evidence="1">
    <location>
        <position position="184"/>
    </location>
    <ligand>
        <name>Zn(2+)</name>
        <dbReference type="ChEBI" id="CHEBI:29105"/>
    </ligand>
</feature>
<feature type="binding site" evidence="1">
    <location>
        <position position="247"/>
    </location>
    <ligand>
        <name>Zn(2+)</name>
        <dbReference type="ChEBI" id="CHEBI:29105"/>
    </ligand>
</feature>
<feature type="binding site" evidence="1">
    <location>
        <position position="264"/>
    </location>
    <ligand>
        <name>Zn(2+)</name>
        <dbReference type="ChEBI" id="CHEBI:29105"/>
    </ligand>
</feature>
<keyword id="KW-0028">Amino-acid biosynthesis</keyword>
<keyword id="KW-0057">Aromatic amino acid biosynthesis</keyword>
<keyword id="KW-0170">Cobalt</keyword>
<keyword id="KW-0963">Cytoplasm</keyword>
<keyword id="KW-0456">Lyase</keyword>
<keyword id="KW-0479">Metal-binding</keyword>
<keyword id="KW-0520">NAD</keyword>
<keyword id="KW-0547">Nucleotide-binding</keyword>
<keyword id="KW-0862">Zinc</keyword>
<protein>
    <recommendedName>
        <fullName evidence="1">3-dehydroquinate synthase</fullName>
        <shortName evidence="1">DHQS</shortName>
        <ecNumber evidence="1">4.2.3.4</ecNumber>
    </recommendedName>
</protein>
<gene>
    <name evidence="1" type="primary">aroB</name>
    <name type="ordered locus">BMA10247_2796</name>
</gene>